<evidence type="ECO:0000255" key="1">
    <source>
        <dbReference type="HAMAP-Rule" id="MF_00815"/>
    </source>
</evidence>
<dbReference type="EMBL" id="CP000546">
    <property type="protein sequence ID" value="ABN02034.1"/>
    <property type="molecule type" value="Genomic_DNA"/>
</dbReference>
<dbReference type="RefSeq" id="WP_004195831.1">
    <property type="nucleotide sequence ID" value="NC_008836.1"/>
</dbReference>
<dbReference type="SMR" id="A2S6J9"/>
<dbReference type="GeneID" id="92980625"/>
<dbReference type="KEGG" id="bml:BMA10229_A1588"/>
<dbReference type="HOGENOM" id="CLU_050669_0_1_4"/>
<dbReference type="Proteomes" id="UP000002283">
    <property type="component" value="Chromosome I"/>
</dbReference>
<dbReference type="GO" id="GO:0005886">
    <property type="term" value="C:plasma membrane"/>
    <property type="evidence" value="ECO:0007669"/>
    <property type="project" value="UniProtKB-SubCell"/>
</dbReference>
<dbReference type="GO" id="GO:0045259">
    <property type="term" value="C:proton-transporting ATP synthase complex"/>
    <property type="evidence" value="ECO:0007669"/>
    <property type="project" value="UniProtKB-KW"/>
</dbReference>
<dbReference type="GO" id="GO:0005524">
    <property type="term" value="F:ATP binding"/>
    <property type="evidence" value="ECO:0007669"/>
    <property type="project" value="UniProtKB-UniRule"/>
</dbReference>
<dbReference type="GO" id="GO:0046933">
    <property type="term" value="F:proton-transporting ATP synthase activity, rotational mechanism"/>
    <property type="evidence" value="ECO:0007669"/>
    <property type="project" value="UniProtKB-UniRule"/>
</dbReference>
<dbReference type="GO" id="GO:0042777">
    <property type="term" value="P:proton motive force-driven plasma membrane ATP synthesis"/>
    <property type="evidence" value="ECO:0007669"/>
    <property type="project" value="UniProtKB-UniRule"/>
</dbReference>
<dbReference type="CDD" id="cd12151">
    <property type="entry name" value="F1-ATPase_gamma"/>
    <property type="match status" value="1"/>
</dbReference>
<dbReference type="FunFam" id="1.10.287.80:FF:000005">
    <property type="entry name" value="ATP synthase gamma chain"/>
    <property type="match status" value="1"/>
</dbReference>
<dbReference type="Gene3D" id="3.40.1380.10">
    <property type="match status" value="1"/>
</dbReference>
<dbReference type="Gene3D" id="1.10.287.80">
    <property type="entry name" value="ATP synthase, gamma subunit, helix hairpin domain"/>
    <property type="match status" value="1"/>
</dbReference>
<dbReference type="HAMAP" id="MF_00815">
    <property type="entry name" value="ATP_synth_gamma_bact"/>
    <property type="match status" value="1"/>
</dbReference>
<dbReference type="InterPro" id="IPR035968">
    <property type="entry name" value="ATP_synth_F1_ATPase_gsu"/>
</dbReference>
<dbReference type="InterPro" id="IPR000131">
    <property type="entry name" value="ATP_synth_F1_gsu"/>
</dbReference>
<dbReference type="InterPro" id="IPR023632">
    <property type="entry name" value="ATP_synth_F1_gsu_CS"/>
</dbReference>
<dbReference type="NCBIfam" id="TIGR01146">
    <property type="entry name" value="ATPsyn_F1gamma"/>
    <property type="match status" value="1"/>
</dbReference>
<dbReference type="NCBIfam" id="NF004144">
    <property type="entry name" value="PRK05621.1-1"/>
    <property type="match status" value="1"/>
</dbReference>
<dbReference type="PANTHER" id="PTHR11693">
    <property type="entry name" value="ATP SYNTHASE GAMMA CHAIN"/>
    <property type="match status" value="1"/>
</dbReference>
<dbReference type="PANTHER" id="PTHR11693:SF22">
    <property type="entry name" value="ATP SYNTHASE SUBUNIT GAMMA, MITOCHONDRIAL"/>
    <property type="match status" value="1"/>
</dbReference>
<dbReference type="Pfam" id="PF00231">
    <property type="entry name" value="ATP-synt"/>
    <property type="match status" value="1"/>
</dbReference>
<dbReference type="PRINTS" id="PR00126">
    <property type="entry name" value="ATPASEGAMMA"/>
</dbReference>
<dbReference type="SUPFAM" id="SSF52943">
    <property type="entry name" value="ATP synthase (F1-ATPase), gamma subunit"/>
    <property type="match status" value="1"/>
</dbReference>
<dbReference type="PROSITE" id="PS00153">
    <property type="entry name" value="ATPASE_GAMMA"/>
    <property type="match status" value="1"/>
</dbReference>
<name>ATPG_BURM9</name>
<feature type="chain" id="PRO_1000053170" description="ATP synthase gamma chain">
    <location>
        <begin position="1"/>
        <end position="291"/>
    </location>
</feature>
<sequence>MAGMKEIRGKIKSVQNTRKITKAMEMVAASKMRRAQERMRAARPYAEKVRAIAAHMSRANPEYRHPFMVANDGVKTAGMILVTTDKGLCGGLNTNVLRASLQKFKELEEQGQKVEATAIGGKGLGFLNRFGAKVISQVVHLGDTPHLDKLIGAVKTQLDLYSEGKLSAVYLAYTRFVNTMKQETVIEQLLPLSSEHFDANDGTPATSWDYIYEPDAQAVVDELLVRYVEALVYQAVAENMASEQSARMVAMKAASDNAKTVISELQLSYNKSRQAAITKELSEIVGGAAAV</sequence>
<proteinExistence type="inferred from homology"/>
<keyword id="KW-0066">ATP synthesis</keyword>
<keyword id="KW-0997">Cell inner membrane</keyword>
<keyword id="KW-1003">Cell membrane</keyword>
<keyword id="KW-0139">CF(1)</keyword>
<keyword id="KW-0375">Hydrogen ion transport</keyword>
<keyword id="KW-0406">Ion transport</keyword>
<keyword id="KW-0472">Membrane</keyword>
<keyword id="KW-0813">Transport</keyword>
<protein>
    <recommendedName>
        <fullName evidence="1">ATP synthase gamma chain</fullName>
    </recommendedName>
    <alternativeName>
        <fullName evidence="1">ATP synthase F1 sector gamma subunit</fullName>
    </alternativeName>
    <alternativeName>
        <fullName evidence="1">F-ATPase gamma subunit</fullName>
    </alternativeName>
</protein>
<gene>
    <name evidence="1" type="primary">atpG</name>
    <name type="ordered locus">BMA10229_A1588</name>
</gene>
<accession>A2S6J9</accession>
<comment type="function">
    <text evidence="1">Produces ATP from ADP in the presence of a proton gradient across the membrane. The gamma chain is believed to be important in regulating ATPase activity and the flow of protons through the CF(0) complex.</text>
</comment>
<comment type="subunit">
    <text evidence="1">F-type ATPases have 2 components, CF(1) - the catalytic core - and CF(0) - the membrane proton channel. CF(1) has five subunits: alpha(3), beta(3), gamma(1), delta(1), epsilon(1). CF(0) has three main subunits: a, b and c.</text>
</comment>
<comment type="subcellular location">
    <subcellularLocation>
        <location evidence="1">Cell inner membrane</location>
        <topology evidence="1">Peripheral membrane protein</topology>
    </subcellularLocation>
</comment>
<comment type="similarity">
    <text evidence="1">Belongs to the ATPase gamma chain family.</text>
</comment>
<organism>
    <name type="scientific">Burkholderia mallei (strain NCTC 10229)</name>
    <dbReference type="NCBI Taxonomy" id="412022"/>
    <lineage>
        <taxon>Bacteria</taxon>
        <taxon>Pseudomonadati</taxon>
        <taxon>Pseudomonadota</taxon>
        <taxon>Betaproteobacteria</taxon>
        <taxon>Burkholderiales</taxon>
        <taxon>Burkholderiaceae</taxon>
        <taxon>Burkholderia</taxon>
        <taxon>pseudomallei group</taxon>
    </lineage>
</organism>
<reference key="1">
    <citation type="journal article" date="2010" name="Genome Biol. Evol.">
        <title>Continuing evolution of Burkholderia mallei through genome reduction and large-scale rearrangements.</title>
        <authorList>
            <person name="Losada L."/>
            <person name="Ronning C.M."/>
            <person name="DeShazer D."/>
            <person name="Woods D."/>
            <person name="Fedorova N."/>
            <person name="Kim H.S."/>
            <person name="Shabalina S.A."/>
            <person name="Pearson T.R."/>
            <person name="Brinkac L."/>
            <person name="Tan P."/>
            <person name="Nandi T."/>
            <person name="Crabtree J."/>
            <person name="Badger J."/>
            <person name="Beckstrom-Sternberg S."/>
            <person name="Saqib M."/>
            <person name="Schutzer S.E."/>
            <person name="Keim P."/>
            <person name="Nierman W.C."/>
        </authorList>
    </citation>
    <scope>NUCLEOTIDE SEQUENCE [LARGE SCALE GENOMIC DNA]</scope>
    <source>
        <strain>NCTC 10229</strain>
    </source>
</reference>